<evidence type="ECO:0000255" key="1">
    <source>
        <dbReference type="HAMAP-Rule" id="MF_01351"/>
    </source>
</evidence>
<sequence length="166" mass="19488">MFPMVTEFMNYGQQTVRAARYIGQGFMITLSHANRLPVTIQYPYEKLITSERFRGRIHFEFDKCIACEVCVRVCPIDLPVVDWKLENDIRKKRLLNYSIDFGICIFCGNCVEYCPTNCLSMTEEYELSTYDRHELNYNQIALGRLPMSIIDDYTIRTILNLPEIKT</sequence>
<protein>
    <recommendedName>
        <fullName evidence="1">NAD(P)H-quinone oxidoreductase subunit I, chloroplastic</fullName>
        <ecNumber evidence="1">7.1.1.-</ecNumber>
    </recommendedName>
    <alternativeName>
        <fullName evidence="1">NAD(P)H dehydrogenase subunit I</fullName>
        <shortName evidence="1">NDH subunit I</shortName>
    </alternativeName>
    <alternativeName>
        <fullName evidence="1">NADH-plastoquinone oxidoreductase subunit I</fullName>
    </alternativeName>
</protein>
<name>NDHI_RAIAR</name>
<keyword id="KW-0004">4Fe-4S</keyword>
<keyword id="KW-0150">Chloroplast</keyword>
<keyword id="KW-0408">Iron</keyword>
<keyword id="KW-0411">Iron-sulfur</keyword>
<keyword id="KW-0472">Membrane</keyword>
<keyword id="KW-0479">Metal-binding</keyword>
<keyword id="KW-0520">NAD</keyword>
<keyword id="KW-0521">NADP</keyword>
<keyword id="KW-0934">Plastid</keyword>
<keyword id="KW-0618">Plastoquinone</keyword>
<keyword id="KW-0874">Quinone</keyword>
<keyword id="KW-0677">Repeat</keyword>
<keyword id="KW-0793">Thylakoid</keyword>
<keyword id="KW-1278">Translocase</keyword>
<gene>
    <name evidence="1" type="primary">ndhI</name>
</gene>
<geneLocation type="chloroplast"/>
<organism>
    <name type="scientific">Raillardella argentea</name>
    <name type="common">Silky raillardella</name>
    <dbReference type="NCBI Taxonomy" id="149453"/>
    <lineage>
        <taxon>Eukaryota</taxon>
        <taxon>Viridiplantae</taxon>
        <taxon>Streptophyta</taxon>
        <taxon>Embryophyta</taxon>
        <taxon>Tracheophyta</taxon>
        <taxon>Spermatophyta</taxon>
        <taxon>Magnoliopsida</taxon>
        <taxon>eudicotyledons</taxon>
        <taxon>Gunneridae</taxon>
        <taxon>Pentapetalae</taxon>
        <taxon>asterids</taxon>
        <taxon>campanulids</taxon>
        <taxon>Asterales</taxon>
        <taxon>Asteraceae</taxon>
        <taxon>Asteroideae</taxon>
        <taxon>Heliantheae alliance</taxon>
        <taxon>Madieae</taxon>
        <taxon>Madiinae</taxon>
        <taxon>Raillardella</taxon>
    </lineage>
</organism>
<proteinExistence type="inferred from homology"/>
<feature type="chain" id="PRO_0000250841" description="NAD(P)H-quinone oxidoreductase subunit I, chloroplastic">
    <location>
        <begin position="1"/>
        <end position="166"/>
    </location>
</feature>
<feature type="domain" description="4Fe-4S ferredoxin-type 1" evidence="1">
    <location>
        <begin position="55"/>
        <end position="84"/>
    </location>
</feature>
<feature type="domain" description="4Fe-4S ferredoxin-type 2" evidence="1">
    <location>
        <begin position="95"/>
        <end position="124"/>
    </location>
</feature>
<feature type="binding site" evidence="1">
    <location>
        <position position="64"/>
    </location>
    <ligand>
        <name>[4Fe-4S] cluster</name>
        <dbReference type="ChEBI" id="CHEBI:49883"/>
        <label>1</label>
    </ligand>
</feature>
<feature type="binding site" evidence="1">
    <location>
        <position position="67"/>
    </location>
    <ligand>
        <name>[4Fe-4S] cluster</name>
        <dbReference type="ChEBI" id="CHEBI:49883"/>
        <label>1</label>
    </ligand>
</feature>
<feature type="binding site" evidence="1">
    <location>
        <position position="70"/>
    </location>
    <ligand>
        <name>[4Fe-4S] cluster</name>
        <dbReference type="ChEBI" id="CHEBI:49883"/>
        <label>1</label>
    </ligand>
</feature>
<feature type="binding site" evidence="1">
    <location>
        <position position="74"/>
    </location>
    <ligand>
        <name>[4Fe-4S] cluster</name>
        <dbReference type="ChEBI" id="CHEBI:49883"/>
        <label>2</label>
    </ligand>
</feature>
<feature type="binding site" evidence="1">
    <location>
        <position position="104"/>
    </location>
    <ligand>
        <name>[4Fe-4S] cluster</name>
        <dbReference type="ChEBI" id="CHEBI:49883"/>
        <label>2</label>
    </ligand>
</feature>
<feature type="binding site" evidence="1">
    <location>
        <position position="107"/>
    </location>
    <ligand>
        <name>[4Fe-4S] cluster</name>
        <dbReference type="ChEBI" id="CHEBI:49883"/>
        <label>2</label>
    </ligand>
</feature>
<feature type="binding site" evidence="1">
    <location>
        <position position="110"/>
    </location>
    <ligand>
        <name>[4Fe-4S] cluster</name>
        <dbReference type="ChEBI" id="CHEBI:49883"/>
        <label>2</label>
    </ligand>
</feature>
<feature type="binding site" evidence="1">
    <location>
        <position position="114"/>
    </location>
    <ligand>
        <name>[4Fe-4S] cluster</name>
        <dbReference type="ChEBI" id="CHEBI:49883"/>
        <label>1</label>
    </ligand>
</feature>
<dbReference type="EC" id="7.1.1.-" evidence="1"/>
<dbReference type="EMBL" id="AF383842">
    <property type="protein sequence ID" value="AAN61783.1"/>
    <property type="molecule type" value="Genomic_DNA"/>
</dbReference>
<dbReference type="SMR" id="Q8HVM1"/>
<dbReference type="GO" id="GO:0009535">
    <property type="term" value="C:chloroplast thylakoid membrane"/>
    <property type="evidence" value="ECO:0007669"/>
    <property type="project" value="UniProtKB-SubCell"/>
</dbReference>
<dbReference type="GO" id="GO:0051539">
    <property type="term" value="F:4 iron, 4 sulfur cluster binding"/>
    <property type="evidence" value="ECO:0007669"/>
    <property type="project" value="UniProtKB-KW"/>
</dbReference>
<dbReference type="GO" id="GO:0005506">
    <property type="term" value="F:iron ion binding"/>
    <property type="evidence" value="ECO:0007669"/>
    <property type="project" value="UniProtKB-UniRule"/>
</dbReference>
<dbReference type="GO" id="GO:0008137">
    <property type="term" value="F:NADH dehydrogenase (ubiquinone) activity"/>
    <property type="evidence" value="ECO:0007669"/>
    <property type="project" value="InterPro"/>
</dbReference>
<dbReference type="GO" id="GO:0048038">
    <property type="term" value="F:quinone binding"/>
    <property type="evidence" value="ECO:0007669"/>
    <property type="project" value="UniProtKB-KW"/>
</dbReference>
<dbReference type="GO" id="GO:0019684">
    <property type="term" value="P:photosynthesis, light reaction"/>
    <property type="evidence" value="ECO:0007669"/>
    <property type="project" value="UniProtKB-UniRule"/>
</dbReference>
<dbReference type="FunFam" id="3.30.70.3270:FF:000006">
    <property type="entry name" value="NAD(P)H-quinone oxidoreductase subunit I, chloroplastic"/>
    <property type="match status" value="1"/>
</dbReference>
<dbReference type="Gene3D" id="3.30.70.3270">
    <property type="match status" value="1"/>
</dbReference>
<dbReference type="HAMAP" id="MF_01351">
    <property type="entry name" value="NDH1_NuoI"/>
    <property type="match status" value="1"/>
</dbReference>
<dbReference type="InterPro" id="IPR017896">
    <property type="entry name" value="4Fe4S_Fe-S-bd"/>
</dbReference>
<dbReference type="InterPro" id="IPR017900">
    <property type="entry name" value="4Fe4S_Fe_S_CS"/>
</dbReference>
<dbReference type="InterPro" id="IPR010226">
    <property type="entry name" value="NADH_quinone_OxRdtase_chainI"/>
</dbReference>
<dbReference type="InterPro" id="IPR004497">
    <property type="entry name" value="NDHI"/>
</dbReference>
<dbReference type="NCBIfam" id="TIGR00403">
    <property type="entry name" value="ndhI"/>
    <property type="match status" value="1"/>
</dbReference>
<dbReference type="NCBIfam" id="TIGR01971">
    <property type="entry name" value="NuoI"/>
    <property type="match status" value="1"/>
</dbReference>
<dbReference type="NCBIfam" id="NF004537">
    <property type="entry name" value="PRK05888.1-3"/>
    <property type="match status" value="1"/>
</dbReference>
<dbReference type="PANTHER" id="PTHR47275">
    <property type="entry name" value="NAD(P)H-QUINONE OXIDOREDUCTASE SUBUNIT I, CHLOROPLASTIC"/>
    <property type="match status" value="1"/>
</dbReference>
<dbReference type="PANTHER" id="PTHR47275:SF1">
    <property type="entry name" value="NAD(P)H-QUINONE OXIDOREDUCTASE SUBUNIT I, CHLOROPLASTIC"/>
    <property type="match status" value="1"/>
</dbReference>
<dbReference type="Pfam" id="PF12838">
    <property type="entry name" value="Fer4_7"/>
    <property type="match status" value="1"/>
</dbReference>
<dbReference type="SUPFAM" id="SSF54862">
    <property type="entry name" value="4Fe-4S ferredoxins"/>
    <property type="match status" value="1"/>
</dbReference>
<dbReference type="PROSITE" id="PS00198">
    <property type="entry name" value="4FE4S_FER_1"/>
    <property type="match status" value="2"/>
</dbReference>
<dbReference type="PROSITE" id="PS51379">
    <property type="entry name" value="4FE4S_FER_2"/>
    <property type="match status" value="2"/>
</dbReference>
<accession>Q8HVM1</accession>
<comment type="function">
    <text evidence="1">NDH shuttles electrons from NAD(P)H:plastoquinone, via FMN and iron-sulfur (Fe-S) centers, to quinones in the photosynthetic chain and possibly in a chloroplast respiratory chain. The immediate electron acceptor for the enzyme in this species is believed to be plastoquinone. Couples the redox reaction to proton translocation, and thus conserves the redox energy in a proton gradient.</text>
</comment>
<comment type="catalytic activity">
    <reaction evidence="1">
        <text>a plastoquinone + NADH + (n+1) H(+)(in) = a plastoquinol + NAD(+) + n H(+)(out)</text>
        <dbReference type="Rhea" id="RHEA:42608"/>
        <dbReference type="Rhea" id="RHEA-COMP:9561"/>
        <dbReference type="Rhea" id="RHEA-COMP:9562"/>
        <dbReference type="ChEBI" id="CHEBI:15378"/>
        <dbReference type="ChEBI" id="CHEBI:17757"/>
        <dbReference type="ChEBI" id="CHEBI:57540"/>
        <dbReference type="ChEBI" id="CHEBI:57945"/>
        <dbReference type="ChEBI" id="CHEBI:62192"/>
    </reaction>
</comment>
<comment type="catalytic activity">
    <reaction evidence="1">
        <text>a plastoquinone + NADPH + (n+1) H(+)(in) = a plastoquinol + NADP(+) + n H(+)(out)</text>
        <dbReference type="Rhea" id="RHEA:42612"/>
        <dbReference type="Rhea" id="RHEA-COMP:9561"/>
        <dbReference type="Rhea" id="RHEA-COMP:9562"/>
        <dbReference type="ChEBI" id="CHEBI:15378"/>
        <dbReference type="ChEBI" id="CHEBI:17757"/>
        <dbReference type="ChEBI" id="CHEBI:57783"/>
        <dbReference type="ChEBI" id="CHEBI:58349"/>
        <dbReference type="ChEBI" id="CHEBI:62192"/>
    </reaction>
</comment>
<comment type="cofactor">
    <cofactor evidence="1">
        <name>[4Fe-4S] cluster</name>
        <dbReference type="ChEBI" id="CHEBI:49883"/>
    </cofactor>
    <text evidence="1">Binds 2 [4Fe-4S] clusters per subunit.</text>
</comment>
<comment type="subunit">
    <text evidence="1">NDH is composed of at least 16 different subunits, 5 of which are encoded in the nucleus.</text>
</comment>
<comment type="subcellular location">
    <subcellularLocation>
        <location evidence="1">Plastid</location>
        <location evidence="1">Chloroplast thylakoid membrane</location>
        <topology evidence="1">Peripheral membrane protein</topology>
    </subcellularLocation>
</comment>
<comment type="similarity">
    <text evidence="1">Belongs to the complex I 23 kDa subunit family.</text>
</comment>
<reference key="1">
    <citation type="submission" date="2003-01" db="EMBL/GenBank/DDBJ databases">
        <title>Chloroplast DNA phylogeny of tribe Heliantheae (Asteraceae).</title>
        <authorList>
            <person name="Panero J.L."/>
            <person name="Baldwin B.G."/>
            <person name="Schilling E.E."/>
            <person name="Clevinger J.A."/>
        </authorList>
    </citation>
    <scope>NUCLEOTIDE SEQUENCE [GENOMIC DNA]</scope>
</reference>